<evidence type="ECO:0000255" key="1">
    <source>
        <dbReference type="HAMAP-Rule" id="MF_01398"/>
    </source>
</evidence>
<evidence type="ECO:0000269" key="2">
    <source>
    </source>
</evidence>
<reference key="1">
    <citation type="journal article" date="1996" name="Nucleic Acids Res.">
        <title>Sequence analysis of 56 kb from the genome of the bacterium Mycoplasma pneumoniae comprising the dnaA region, the atp operon and a cluster of ribosomal protein genes.</title>
        <authorList>
            <person name="Hilbert H."/>
            <person name="Himmelreich R."/>
            <person name="Plagens H."/>
            <person name="Herrmann R."/>
        </authorList>
    </citation>
    <scope>NUCLEOTIDE SEQUENCE [GENOMIC DNA]</scope>
    <source>
        <strain>ATCC 29342 / M129 / Subtype 1</strain>
    </source>
</reference>
<reference key="2">
    <citation type="journal article" date="1996" name="Nucleic Acids Res.">
        <title>Complete sequence analysis of the genome of the bacterium Mycoplasma pneumoniae.</title>
        <authorList>
            <person name="Himmelreich R."/>
            <person name="Hilbert H."/>
            <person name="Plagens H."/>
            <person name="Pirkl E."/>
            <person name="Li B.-C."/>
            <person name="Herrmann R."/>
        </authorList>
    </citation>
    <scope>NUCLEOTIDE SEQUENCE [LARGE SCALE GENOMIC DNA]</scope>
    <source>
        <strain>ATCC 29342 / M129 / Subtype 1</strain>
    </source>
</reference>
<reference key="3">
    <citation type="journal article" date="1998" name="J. Biol. Chem.">
        <title>The subunit b of the F0F1-type ATPase of the bacterium Mycoplasma pneumoniae is a lipoprotein.</title>
        <authorList>
            <person name="Pyrowolakis G."/>
            <person name="Hofmann D."/>
            <person name="Herrmann R."/>
        </authorList>
    </citation>
    <scope>CHARACTERIZATION AS A LIPOPROTEIN</scope>
    <scope>DIACYLGLYCEROL AT CYS-28</scope>
    <scope>PALMITOYLATION AT CYS-28</scope>
    <source>
        <strain>ATCC 29342 / M129 / Subtype 1</strain>
    </source>
</reference>
<feature type="signal peptide">
    <location>
        <begin position="1"/>
        <end position="27"/>
    </location>
</feature>
<feature type="chain" id="PRO_0000002632" description="ATP synthase subunit b">
    <location>
        <begin position="28"/>
        <end position="207"/>
    </location>
</feature>
<feature type="transmembrane region" description="Helical" evidence="1">
    <location>
        <begin position="49"/>
        <end position="69"/>
    </location>
</feature>
<feature type="lipid moiety-binding region" description="N-palmitoyl cysteine" evidence="2">
    <location>
        <position position="28"/>
    </location>
</feature>
<feature type="lipid moiety-binding region" description="S-diacylglycerol cysteine" evidence="2">
    <location>
        <position position="28"/>
    </location>
</feature>
<accession>Q50327</accession>
<dbReference type="EMBL" id="U43738">
    <property type="protein sequence ID" value="AAC43655.1"/>
    <property type="molecule type" value="Genomic_DNA"/>
</dbReference>
<dbReference type="EMBL" id="U00089">
    <property type="protein sequence ID" value="AAB95888.1"/>
    <property type="molecule type" value="Genomic_DNA"/>
</dbReference>
<dbReference type="PIR" id="S62845">
    <property type="entry name" value="S62845"/>
</dbReference>
<dbReference type="RefSeq" id="NP_110291.1">
    <property type="nucleotide sequence ID" value="NC_000912.1"/>
</dbReference>
<dbReference type="RefSeq" id="WP_010874959.1">
    <property type="nucleotide sequence ID" value="NZ_OU342337.1"/>
</dbReference>
<dbReference type="SMR" id="Q50327"/>
<dbReference type="IntAct" id="Q50327">
    <property type="interactions" value="3"/>
</dbReference>
<dbReference type="STRING" id="272634.MPN_602"/>
<dbReference type="EnsemblBacteria" id="AAB95888">
    <property type="protein sequence ID" value="AAB95888"/>
    <property type="gene ID" value="MPN_602"/>
</dbReference>
<dbReference type="GeneID" id="66608713"/>
<dbReference type="KEGG" id="mpn:MPN_602"/>
<dbReference type="PATRIC" id="fig|272634.6.peg.665"/>
<dbReference type="HOGENOM" id="CLU_079215_4_3_14"/>
<dbReference type="OrthoDB" id="399036at2"/>
<dbReference type="BioCyc" id="MetaCyc:MONOMER-536"/>
<dbReference type="BioCyc" id="MPNE272634:G1GJ3-977-MONOMER"/>
<dbReference type="Proteomes" id="UP000000808">
    <property type="component" value="Chromosome"/>
</dbReference>
<dbReference type="GO" id="GO:0005886">
    <property type="term" value="C:plasma membrane"/>
    <property type="evidence" value="ECO:0007669"/>
    <property type="project" value="UniProtKB-SubCell"/>
</dbReference>
<dbReference type="GO" id="GO:0045259">
    <property type="term" value="C:proton-transporting ATP synthase complex"/>
    <property type="evidence" value="ECO:0007669"/>
    <property type="project" value="UniProtKB-KW"/>
</dbReference>
<dbReference type="GO" id="GO:0046933">
    <property type="term" value="F:proton-transporting ATP synthase activity, rotational mechanism"/>
    <property type="evidence" value="ECO:0007669"/>
    <property type="project" value="UniProtKB-UniRule"/>
</dbReference>
<dbReference type="GO" id="GO:0046961">
    <property type="term" value="F:proton-transporting ATPase activity, rotational mechanism"/>
    <property type="evidence" value="ECO:0007669"/>
    <property type="project" value="TreeGrafter"/>
</dbReference>
<dbReference type="CDD" id="cd06503">
    <property type="entry name" value="ATP-synt_Fo_b"/>
    <property type="match status" value="1"/>
</dbReference>
<dbReference type="HAMAP" id="MF_01398">
    <property type="entry name" value="ATP_synth_b_bprime"/>
    <property type="match status" value="1"/>
</dbReference>
<dbReference type="InterPro" id="IPR002146">
    <property type="entry name" value="ATP_synth_b/b'su_bac/chlpt"/>
</dbReference>
<dbReference type="InterPro" id="IPR005864">
    <property type="entry name" value="ATP_synth_F0_bsu_bac"/>
</dbReference>
<dbReference type="InterPro" id="IPR050059">
    <property type="entry name" value="ATP_synthase_B_chain"/>
</dbReference>
<dbReference type="NCBIfam" id="TIGR01144">
    <property type="entry name" value="ATP_synt_b"/>
    <property type="match status" value="1"/>
</dbReference>
<dbReference type="NCBIfam" id="NF004873">
    <property type="entry name" value="PRK06231.1-3"/>
    <property type="match status" value="1"/>
</dbReference>
<dbReference type="PANTHER" id="PTHR33445:SF1">
    <property type="entry name" value="ATP SYNTHASE SUBUNIT B"/>
    <property type="match status" value="1"/>
</dbReference>
<dbReference type="PANTHER" id="PTHR33445">
    <property type="entry name" value="ATP SYNTHASE SUBUNIT B', CHLOROPLASTIC"/>
    <property type="match status" value="1"/>
</dbReference>
<dbReference type="Pfam" id="PF00430">
    <property type="entry name" value="ATP-synt_B"/>
    <property type="match status" value="1"/>
</dbReference>
<dbReference type="PROSITE" id="PS51257">
    <property type="entry name" value="PROKAR_LIPOPROTEIN"/>
    <property type="match status" value="1"/>
</dbReference>
<organism>
    <name type="scientific">Mycoplasma pneumoniae (strain ATCC 29342 / M129 / Subtype 1)</name>
    <name type="common">Mycoplasmoides pneumoniae</name>
    <dbReference type="NCBI Taxonomy" id="272634"/>
    <lineage>
        <taxon>Bacteria</taxon>
        <taxon>Bacillati</taxon>
        <taxon>Mycoplasmatota</taxon>
        <taxon>Mycoplasmoidales</taxon>
        <taxon>Mycoplasmoidaceae</taxon>
        <taxon>Mycoplasmoides</taxon>
    </lineage>
</organism>
<name>ATPF_MYCPN</name>
<keyword id="KW-0066">ATP synthesis</keyword>
<keyword id="KW-1003">Cell membrane</keyword>
<keyword id="KW-0138">CF(0)</keyword>
<keyword id="KW-0375">Hydrogen ion transport</keyword>
<keyword id="KW-0406">Ion transport</keyword>
<keyword id="KW-0449">Lipoprotein</keyword>
<keyword id="KW-0472">Membrane</keyword>
<keyword id="KW-0564">Palmitate</keyword>
<keyword id="KW-1185">Reference proteome</keyword>
<keyword id="KW-0732">Signal</keyword>
<keyword id="KW-0812">Transmembrane</keyword>
<keyword id="KW-1133">Transmembrane helix</keyword>
<keyword id="KW-0813">Transport</keyword>
<comment type="function">
    <text evidence="1">F(1)F(0) ATP synthase produces ATP from ADP in the presence of a proton or sodium gradient. F-type ATPases consist of two structural domains, F(1) containing the extramembraneous catalytic core and F(0) containing the membrane proton channel, linked together by a central stalk and a peripheral stalk. During catalysis, ATP synthesis in the catalytic domain of F(1) is coupled via a rotary mechanism of the central stalk subunits to proton translocation.</text>
</comment>
<comment type="function">
    <text evidence="1">Component of the F(0) channel, it forms part of the peripheral stalk, linking F(1) to F(0).</text>
</comment>
<comment type="subunit">
    <text evidence="1">F-type ATPases have 2 components, F(1) - the catalytic core - and F(0) - the membrane proton channel. F(1) has five subunits: alpha(3), beta(3), gamma(1), delta(1), epsilon(1). F(0) has three main subunits: a(1), b(2) and c(10-14). The alpha and beta chains form an alternating ring which encloses part of the gamma chain. F(1) is attached to F(0) by a central stalk formed by the gamma and epsilon chains, while a peripheral stalk is formed by the delta and b chains.</text>
</comment>
<comment type="subcellular location">
    <subcellularLocation>
        <location>Cell membrane</location>
        <topology>Single-pass membrane protein</topology>
    </subcellularLocation>
</comment>
<comment type="similarity">
    <text evidence="1">Belongs to the ATPase B chain family.</text>
</comment>
<sequence length="207" mass="24019">MKLRATFVFKTTLVALSFALFALFLVSCTENVKEIKSESVINELFPNLWVFLAHLLAFVILLFLLLFLFWKPTQKFLNQRKALLEEQVNQANSLEQQAQALLQQANQRHENSLVVAKEIVDQANYEALQLKSEIEKKANRQANLMIFQARQEIEKEKRLIQEQSLKESVELAMLAAKELIIKKVDVKADKAFIEEFIRELEAEDDHD</sequence>
<protein>
    <recommendedName>
        <fullName evidence="1">ATP synthase subunit b</fullName>
    </recommendedName>
    <alternativeName>
        <fullName evidence="1">ATP synthase F(0) sector subunit b</fullName>
    </alternativeName>
    <alternativeName>
        <fullName evidence="1">ATPase subunit I</fullName>
    </alternativeName>
    <alternativeName>
        <fullName evidence="1">F-type ATPase subunit b</fullName>
        <shortName evidence="1">F-ATPase subunit b</shortName>
    </alternativeName>
</protein>
<proteinExistence type="evidence at protein level"/>
<gene>
    <name evidence="1" type="primary">atpF</name>
    <name type="ordered locus">MPN_602</name>
    <name type="ORF">MP240</name>
</gene>